<comment type="function">
    <text>Cuttlefish spermiogenesis is characterized by a double nuclear protein transition: histones -&gt; spermatid-specific proteins (T1/T2) -&gt; protamines (SP1/SP2). The protamines compact sperm DNA into a highly condensed, stable and inactive complex.</text>
</comment>
<comment type="subcellular location">
    <subcellularLocation>
        <location>Nucleus</location>
    </subcellularLocation>
    <subcellularLocation>
        <location>Chromosome</location>
    </subcellularLocation>
</comment>
<comment type="tissue specificity">
    <text>Testis.</text>
</comment>
<comment type="developmental stage">
    <text>Spermiogenesis.</text>
</comment>
<comment type="PTM">
    <text>Phosphorylation occurs at different degrees. The triphosphorylated form may be predominant in T2. SP2 appears to be phosphorylated in elongated spermatids, but dephosphorylated in mature sperm cells.</text>
</comment>
<reference key="1">
    <citation type="journal article" date="1991" name="J. Biol. Chem.">
        <title>Cuttlefish spermatid-specific protein T. Molecular characterization of two variants T1 and T2, putative precursors of sperm protamine variants Sp1 and Sp2.</title>
        <authorList>
            <person name="Wouters-Tyrou D."/>
            <person name="Chartier-Harlin M.-C."/>
            <person name="Martin-Ponthieu A."/>
            <person name="Boutillon C."/>
            <person name="van Dorsselaer A."/>
            <person name="Sautiere P."/>
        </authorList>
    </citation>
    <scope>PROTEIN SEQUENCE</scope>
</reference>
<reference key="2">
    <citation type="journal article" date="1991" name="Eur. J. Biochem.">
        <title>Cuttlefish sperm protamines. 1. Amino acid sequences of two distinct variants.</title>
        <authorList>
            <person name="Martin-Ponthieu A."/>
            <person name="Wouters-Tyrou D."/>
            <person name="Belaiche D."/>
            <person name="Sautiere P."/>
            <person name="Schindler P."/>
            <person name="van Dorsselaer A."/>
        </authorList>
    </citation>
    <scope>PROTEIN SEQUENCE OF 22-77</scope>
</reference>
<keyword id="KW-0158">Chromosome</keyword>
<keyword id="KW-0217">Developmental protein</keyword>
<keyword id="KW-0221">Differentiation</keyword>
<keyword id="KW-0903">Direct protein sequencing</keyword>
<keyword id="KW-0226">DNA condensation</keyword>
<keyword id="KW-0238">DNA-binding</keyword>
<keyword id="KW-0544">Nucleosome core</keyword>
<keyword id="KW-0539">Nucleus</keyword>
<keyword id="KW-0597">Phosphoprotein</keyword>
<keyword id="KW-0744">Spermatogenesis</keyword>
<evidence type="ECO:0000256" key="1">
    <source>
        <dbReference type="SAM" id="MobiDB-lite"/>
    </source>
</evidence>
<organism>
    <name type="scientific">Sepia officinalis</name>
    <name type="common">Common cuttlefish</name>
    <dbReference type="NCBI Taxonomy" id="6610"/>
    <lineage>
        <taxon>Eukaryota</taxon>
        <taxon>Metazoa</taxon>
        <taxon>Spiralia</taxon>
        <taxon>Lophotrochozoa</taxon>
        <taxon>Mollusca</taxon>
        <taxon>Cephalopoda</taxon>
        <taxon>Coleoidea</taxon>
        <taxon>Decapodiformes</taxon>
        <taxon>Sepiida</taxon>
        <taxon>Sepiina</taxon>
        <taxon>Sepiidae</taxon>
        <taxon>Sepia</taxon>
    </lineage>
</organism>
<proteinExistence type="evidence at protein level"/>
<sequence length="77" mass="10485">MKVAANTSKMLVEKLDLLKGGRRRRRRSRRRRRSRRRRSRSPYRRRYRRRRRRRRSRRRRRYRRRRSYSRRRYRRRR</sequence>
<feature type="chain" id="PRO_0000025825" description="Spermatid-specific protein T2">
    <location>
        <begin position="1"/>
        <end position="77"/>
    </location>
</feature>
<feature type="chain" id="PRO_0000045875" description="Spermatid-specific protein T2B">
    <location>
        <begin position="2"/>
        <end position="77"/>
    </location>
</feature>
<feature type="chain" id="PRO_0000025826" description="Sperm protamine SP2">
    <location>
        <begin position="22"/>
        <end position="77"/>
    </location>
</feature>
<feature type="region of interest" description="Disordered" evidence="1">
    <location>
        <begin position="1"/>
        <end position="77"/>
    </location>
</feature>
<feature type="region of interest" description="Hydrophobic">
    <location>
        <begin position="1"/>
        <end position="21"/>
    </location>
</feature>
<feature type="compositionally biased region" description="Basic residues" evidence="1">
    <location>
        <begin position="20"/>
        <end position="77"/>
    </location>
</feature>
<dbReference type="PIR" id="B40973">
    <property type="entry name" value="B40973"/>
</dbReference>
<dbReference type="GO" id="GO:0000786">
    <property type="term" value="C:nucleosome"/>
    <property type="evidence" value="ECO:0007669"/>
    <property type="project" value="UniProtKB-KW"/>
</dbReference>
<dbReference type="GO" id="GO:0005634">
    <property type="term" value="C:nucleus"/>
    <property type="evidence" value="ECO:0007669"/>
    <property type="project" value="UniProtKB-SubCell"/>
</dbReference>
<dbReference type="GO" id="GO:0003677">
    <property type="term" value="F:DNA binding"/>
    <property type="evidence" value="ECO:0007669"/>
    <property type="project" value="UniProtKB-KW"/>
</dbReference>
<dbReference type="GO" id="GO:0030154">
    <property type="term" value="P:cell differentiation"/>
    <property type="evidence" value="ECO:0007669"/>
    <property type="project" value="UniProtKB-KW"/>
</dbReference>
<dbReference type="GO" id="GO:0030261">
    <property type="term" value="P:chromosome condensation"/>
    <property type="evidence" value="ECO:0007669"/>
    <property type="project" value="UniProtKB-KW"/>
</dbReference>
<dbReference type="GO" id="GO:0007283">
    <property type="term" value="P:spermatogenesis"/>
    <property type="evidence" value="ECO:0007669"/>
    <property type="project" value="UniProtKB-KW"/>
</dbReference>
<accession>P80002</accession>
<name>PRT2_SEPOF</name>
<protein>
    <recommendedName>
        <fullName>Spermatid-specific protein T2</fullName>
    </recommendedName>
    <component>
        <recommendedName>
            <fullName>Spermatid-specific protein T2B</fullName>
        </recommendedName>
    </component>
    <component>
        <recommendedName>
            <fullName>Sperm protamine SP2</fullName>
        </recommendedName>
    </component>
</protein>